<sequence length="286" mass="33220">MGKKRKQTIKNDYNEKITKRKVKNNLTDGKARALTVFESLPLEVLRLIFLLSNNSNLAVTSRSLRHRLSLRNNTPIFMPIDFTLSMVPKSIILSIQRGLLRRYFTLQILTKIDELVISGFVKKSPNEDIKDGRVIHAGHEGFIPKRILFLPNAEDFIAELEHRNFLFKASSLRNGFLLALKQRNIPVIRQVGKIVTERLISIPDDEVEFCFLTWFEYTMEQNSVELLDIVFGFWNNIIEKRFSKSFIDSYLTRLVDIAISKNVTEIMYYLIEKGAIPQLPNLLKLF</sequence>
<gene>
    <name type="ORF">SPCC736.02</name>
</gene>
<accession>O74951</accession>
<protein>
    <recommendedName>
        <fullName>Uncharacterized protein C736.02</fullName>
    </recommendedName>
</protein>
<keyword id="KW-1185">Reference proteome</keyword>
<name>YJC2_SCHPO</name>
<organism>
    <name type="scientific">Schizosaccharomyces pombe (strain 972 / ATCC 24843)</name>
    <name type="common">Fission yeast</name>
    <dbReference type="NCBI Taxonomy" id="284812"/>
    <lineage>
        <taxon>Eukaryota</taxon>
        <taxon>Fungi</taxon>
        <taxon>Dikarya</taxon>
        <taxon>Ascomycota</taxon>
        <taxon>Taphrinomycotina</taxon>
        <taxon>Schizosaccharomycetes</taxon>
        <taxon>Schizosaccharomycetales</taxon>
        <taxon>Schizosaccharomycetaceae</taxon>
        <taxon>Schizosaccharomyces</taxon>
    </lineage>
</organism>
<feature type="chain" id="PRO_0000304103" description="Uncharacterized protein C736.02">
    <location>
        <begin position="1"/>
        <end position="286"/>
    </location>
</feature>
<proteinExistence type="predicted"/>
<reference key="1">
    <citation type="journal article" date="2002" name="Nature">
        <title>The genome sequence of Schizosaccharomyces pombe.</title>
        <authorList>
            <person name="Wood V."/>
            <person name="Gwilliam R."/>
            <person name="Rajandream M.A."/>
            <person name="Lyne M.H."/>
            <person name="Lyne R."/>
            <person name="Stewart A."/>
            <person name="Sgouros J.G."/>
            <person name="Peat N."/>
            <person name="Hayles J."/>
            <person name="Baker S.G."/>
            <person name="Basham D."/>
            <person name="Bowman S."/>
            <person name="Brooks K."/>
            <person name="Brown D."/>
            <person name="Brown S."/>
            <person name="Chillingworth T."/>
            <person name="Churcher C.M."/>
            <person name="Collins M."/>
            <person name="Connor R."/>
            <person name="Cronin A."/>
            <person name="Davis P."/>
            <person name="Feltwell T."/>
            <person name="Fraser A."/>
            <person name="Gentles S."/>
            <person name="Goble A."/>
            <person name="Hamlin N."/>
            <person name="Harris D.E."/>
            <person name="Hidalgo J."/>
            <person name="Hodgson G."/>
            <person name="Holroyd S."/>
            <person name="Hornsby T."/>
            <person name="Howarth S."/>
            <person name="Huckle E.J."/>
            <person name="Hunt S."/>
            <person name="Jagels K."/>
            <person name="James K.D."/>
            <person name="Jones L."/>
            <person name="Jones M."/>
            <person name="Leather S."/>
            <person name="McDonald S."/>
            <person name="McLean J."/>
            <person name="Mooney P."/>
            <person name="Moule S."/>
            <person name="Mungall K.L."/>
            <person name="Murphy L.D."/>
            <person name="Niblett D."/>
            <person name="Odell C."/>
            <person name="Oliver K."/>
            <person name="O'Neil S."/>
            <person name="Pearson D."/>
            <person name="Quail M.A."/>
            <person name="Rabbinowitsch E."/>
            <person name="Rutherford K.M."/>
            <person name="Rutter S."/>
            <person name="Saunders D."/>
            <person name="Seeger K."/>
            <person name="Sharp S."/>
            <person name="Skelton J."/>
            <person name="Simmonds M.N."/>
            <person name="Squares R."/>
            <person name="Squares S."/>
            <person name="Stevens K."/>
            <person name="Taylor K."/>
            <person name="Taylor R.G."/>
            <person name="Tivey A."/>
            <person name="Walsh S.V."/>
            <person name="Warren T."/>
            <person name="Whitehead S."/>
            <person name="Woodward J.R."/>
            <person name="Volckaert G."/>
            <person name="Aert R."/>
            <person name="Robben J."/>
            <person name="Grymonprez B."/>
            <person name="Weltjens I."/>
            <person name="Vanstreels E."/>
            <person name="Rieger M."/>
            <person name="Schaefer M."/>
            <person name="Mueller-Auer S."/>
            <person name="Gabel C."/>
            <person name="Fuchs M."/>
            <person name="Duesterhoeft A."/>
            <person name="Fritzc C."/>
            <person name="Holzer E."/>
            <person name="Moestl D."/>
            <person name="Hilbert H."/>
            <person name="Borzym K."/>
            <person name="Langer I."/>
            <person name="Beck A."/>
            <person name="Lehrach H."/>
            <person name="Reinhardt R."/>
            <person name="Pohl T.M."/>
            <person name="Eger P."/>
            <person name="Zimmermann W."/>
            <person name="Wedler H."/>
            <person name="Wambutt R."/>
            <person name="Purnelle B."/>
            <person name="Goffeau A."/>
            <person name="Cadieu E."/>
            <person name="Dreano S."/>
            <person name="Gloux S."/>
            <person name="Lelaure V."/>
            <person name="Mottier S."/>
            <person name="Galibert F."/>
            <person name="Aves S.J."/>
            <person name="Xiang Z."/>
            <person name="Hunt C."/>
            <person name="Moore K."/>
            <person name="Hurst S.M."/>
            <person name="Lucas M."/>
            <person name="Rochet M."/>
            <person name="Gaillardin C."/>
            <person name="Tallada V.A."/>
            <person name="Garzon A."/>
            <person name="Thode G."/>
            <person name="Daga R.R."/>
            <person name="Cruzado L."/>
            <person name="Jimenez J."/>
            <person name="Sanchez M."/>
            <person name="del Rey F."/>
            <person name="Benito J."/>
            <person name="Dominguez A."/>
            <person name="Revuelta J.L."/>
            <person name="Moreno S."/>
            <person name="Armstrong J."/>
            <person name="Forsburg S.L."/>
            <person name="Cerutti L."/>
            <person name="Lowe T."/>
            <person name="McCombie W.R."/>
            <person name="Paulsen I."/>
            <person name="Potashkin J."/>
            <person name="Shpakovski G.V."/>
            <person name="Ussery D."/>
            <person name="Barrell B.G."/>
            <person name="Nurse P."/>
        </authorList>
    </citation>
    <scope>NUCLEOTIDE SEQUENCE [LARGE SCALE GENOMIC DNA]</scope>
    <source>
        <strain>972 / ATCC 24843</strain>
    </source>
</reference>
<dbReference type="EMBL" id="CU329672">
    <property type="protein sequence ID" value="CAA19266.1"/>
    <property type="molecule type" value="Genomic_DNA"/>
</dbReference>
<dbReference type="PIR" id="T41559">
    <property type="entry name" value="T41559"/>
</dbReference>
<dbReference type="RefSeq" id="NP_587773.1">
    <property type="nucleotide sequence ID" value="NM_001022766.2"/>
</dbReference>
<dbReference type="BioGRID" id="276006">
    <property type="interactions" value="29"/>
</dbReference>
<dbReference type="STRING" id="284812.O74951"/>
<dbReference type="PaxDb" id="4896-SPCC736.02.1"/>
<dbReference type="EnsemblFungi" id="SPCC736.02.1">
    <property type="protein sequence ID" value="SPCC736.02.1:pep"/>
    <property type="gene ID" value="SPCC736.02"/>
</dbReference>
<dbReference type="KEGG" id="spo:2539443"/>
<dbReference type="PomBase" id="SPCC736.02"/>
<dbReference type="VEuPathDB" id="FungiDB:SPCC736.02"/>
<dbReference type="HOGENOM" id="CLU_973730_0_0_1"/>
<dbReference type="InParanoid" id="O74951"/>
<dbReference type="OMA" id="KGHIPRR"/>
<dbReference type="PRO" id="PR:O74951"/>
<dbReference type="Proteomes" id="UP000002485">
    <property type="component" value="Chromosome III"/>
</dbReference>